<keyword id="KW-0489">Methyltransferase</keyword>
<keyword id="KW-0949">S-adenosyl-L-methionine</keyword>
<keyword id="KW-0808">Transferase</keyword>
<keyword id="KW-0831">Ubiquinone biosynthesis</keyword>
<organism>
    <name type="scientific">Rhodopseudomonas palustris (strain ATCC BAA-98 / CGA009)</name>
    <dbReference type="NCBI Taxonomy" id="258594"/>
    <lineage>
        <taxon>Bacteria</taxon>
        <taxon>Pseudomonadati</taxon>
        <taxon>Pseudomonadota</taxon>
        <taxon>Alphaproteobacteria</taxon>
        <taxon>Hyphomicrobiales</taxon>
        <taxon>Nitrobacteraceae</taxon>
        <taxon>Rhodopseudomonas</taxon>
    </lineage>
</organism>
<comment type="function">
    <text evidence="1">O-methyltransferase that catalyzes the 2 O-methylation steps in the ubiquinone biosynthetic pathway.</text>
</comment>
<comment type="catalytic activity">
    <reaction evidence="1">
        <text>a 3-demethylubiquinol + S-adenosyl-L-methionine = a ubiquinol + S-adenosyl-L-homocysteine + H(+)</text>
        <dbReference type="Rhea" id="RHEA:44380"/>
        <dbReference type="Rhea" id="RHEA-COMP:9566"/>
        <dbReference type="Rhea" id="RHEA-COMP:10914"/>
        <dbReference type="ChEBI" id="CHEBI:15378"/>
        <dbReference type="ChEBI" id="CHEBI:17976"/>
        <dbReference type="ChEBI" id="CHEBI:57856"/>
        <dbReference type="ChEBI" id="CHEBI:59789"/>
        <dbReference type="ChEBI" id="CHEBI:84422"/>
        <dbReference type="EC" id="2.1.1.64"/>
    </reaction>
</comment>
<comment type="catalytic activity">
    <reaction evidence="1">
        <text>a 3-(all-trans-polyprenyl)benzene-1,2-diol + S-adenosyl-L-methionine = a 2-methoxy-6-(all-trans-polyprenyl)phenol + S-adenosyl-L-homocysteine + H(+)</text>
        <dbReference type="Rhea" id="RHEA:31411"/>
        <dbReference type="Rhea" id="RHEA-COMP:9550"/>
        <dbReference type="Rhea" id="RHEA-COMP:9551"/>
        <dbReference type="ChEBI" id="CHEBI:15378"/>
        <dbReference type="ChEBI" id="CHEBI:57856"/>
        <dbReference type="ChEBI" id="CHEBI:59789"/>
        <dbReference type="ChEBI" id="CHEBI:62729"/>
        <dbReference type="ChEBI" id="CHEBI:62731"/>
        <dbReference type="EC" id="2.1.1.222"/>
    </reaction>
</comment>
<comment type="pathway">
    <text evidence="1">Cofactor biosynthesis; ubiquinone biosynthesis.</text>
</comment>
<comment type="similarity">
    <text evidence="1">Belongs to the methyltransferase superfamily. UbiG/COQ3 family.</text>
</comment>
<comment type="sequence caution" evidence="2">
    <conflict type="erroneous initiation">
        <sequence resource="EMBL-CDS" id="CAE26047"/>
    </conflict>
</comment>
<protein>
    <recommendedName>
        <fullName evidence="1">Ubiquinone biosynthesis O-methyltransferase</fullName>
    </recommendedName>
    <alternativeName>
        <fullName evidence="1">2-polyprenyl-6-hydroxyphenol methylase</fullName>
        <ecNumber evidence="1">2.1.1.222</ecNumber>
    </alternativeName>
    <alternativeName>
        <fullName evidence="1">3-demethylubiquinone 3-O-methyltransferase</fullName>
        <ecNumber evidence="1">2.1.1.64</ecNumber>
    </alternativeName>
</protein>
<name>UBIG_RHOPA</name>
<dbReference type="EC" id="2.1.1.222" evidence="1"/>
<dbReference type="EC" id="2.1.1.64" evidence="1"/>
<dbReference type="EMBL" id="BX572594">
    <property type="protein sequence ID" value="CAE26047.1"/>
    <property type="status" value="ALT_INIT"/>
    <property type="molecule type" value="Genomic_DNA"/>
</dbReference>
<dbReference type="RefSeq" id="WP_012494270.1">
    <property type="nucleotide sequence ID" value="NZ_CP116810.1"/>
</dbReference>
<dbReference type="SMR" id="Q6NC69"/>
<dbReference type="STRING" id="258594.RPA0603"/>
<dbReference type="GeneID" id="66891623"/>
<dbReference type="eggNOG" id="COG2227">
    <property type="taxonomic scope" value="Bacteria"/>
</dbReference>
<dbReference type="HOGENOM" id="CLU_042432_0_0_5"/>
<dbReference type="PhylomeDB" id="Q6NC69"/>
<dbReference type="UniPathway" id="UPA00232"/>
<dbReference type="GO" id="GO:0102208">
    <property type="term" value="F:2-polyprenyl-6-hydroxyphenol methylase activity"/>
    <property type="evidence" value="ECO:0007669"/>
    <property type="project" value="UniProtKB-EC"/>
</dbReference>
<dbReference type="GO" id="GO:0061542">
    <property type="term" value="F:3-demethylubiquinol 3-O-methyltransferase activity"/>
    <property type="evidence" value="ECO:0007669"/>
    <property type="project" value="UniProtKB-UniRule"/>
</dbReference>
<dbReference type="GO" id="GO:0010420">
    <property type="term" value="F:polyprenyldihydroxybenzoate methyltransferase activity"/>
    <property type="evidence" value="ECO:0007669"/>
    <property type="project" value="InterPro"/>
</dbReference>
<dbReference type="GO" id="GO:0032259">
    <property type="term" value="P:methylation"/>
    <property type="evidence" value="ECO:0007669"/>
    <property type="project" value="UniProtKB-KW"/>
</dbReference>
<dbReference type="CDD" id="cd02440">
    <property type="entry name" value="AdoMet_MTases"/>
    <property type="match status" value="1"/>
</dbReference>
<dbReference type="Gene3D" id="3.40.50.150">
    <property type="entry name" value="Vaccinia Virus protein VP39"/>
    <property type="match status" value="1"/>
</dbReference>
<dbReference type="HAMAP" id="MF_00472">
    <property type="entry name" value="UbiG"/>
    <property type="match status" value="1"/>
</dbReference>
<dbReference type="InterPro" id="IPR029063">
    <property type="entry name" value="SAM-dependent_MTases_sf"/>
</dbReference>
<dbReference type="InterPro" id="IPR010233">
    <property type="entry name" value="UbiG_MeTrfase"/>
</dbReference>
<dbReference type="NCBIfam" id="TIGR01983">
    <property type="entry name" value="UbiG"/>
    <property type="match status" value="1"/>
</dbReference>
<dbReference type="PANTHER" id="PTHR43464">
    <property type="entry name" value="METHYLTRANSFERASE"/>
    <property type="match status" value="1"/>
</dbReference>
<dbReference type="PANTHER" id="PTHR43464:SF19">
    <property type="entry name" value="UBIQUINONE BIOSYNTHESIS O-METHYLTRANSFERASE, MITOCHONDRIAL"/>
    <property type="match status" value="1"/>
</dbReference>
<dbReference type="Pfam" id="PF13489">
    <property type="entry name" value="Methyltransf_23"/>
    <property type="match status" value="1"/>
</dbReference>
<dbReference type="SUPFAM" id="SSF53335">
    <property type="entry name" value="S-adenosyl-L-methionine-dependent methyltransferases"/>
    <property type="match status" value="1"/>
</dbReference>
<feature type="chain" id="PRO_0000193397" description="Ubiquinone biosynthesis O-methyltransferase">
    <location>
        <begin position="1"/>
        <end position="253"/>
    </location>
</feature>
<feature type="binding site" evidence="1">
    <location>
        <position position="47"/>
    </location>
    <ligand>
        <name>S-adenosyl-L-methionine</name>
        <dbReference type="ChEBI" id="CHEBI:59789"/>
    </ligand>
</feature>
<feature type="binding site" evidence="1">
    <location>
        <position position="78"/>
    </location>
    <ligand>
        <name>S-adenosyl-L-methionine</name>
        <dbReference type="ChEBI" id="CHEBI:59789"/>
    </ligand>
</feature>
<feature type="binding site" evidence="1">
    <location>
        <position position="99"/>
    </location>
    <ligand>
        <name>S-adenosyl-L-methionine</name>
        <dbReference type="ChEBI" id="CHEBI:59789"/>
    </ligand>
</feature>
<feature type="binding site" evidence="1">
    <location>
        <position position="141"/>
    </location>
    <ligand>
        <name>S-adenosyl-L-methionine</name>
        <dbReference type="ChEBI" id="CHEBI:59789"/>
    </ligand>
</feature>
<proteinExistence type="inferred from homology"/>
<accession>Q6NC69</accession>
<sequence>MALQPESPGQPASTVDPAEIAKFSKLSAEWWDPTGRMAPLHRINPLRISFIRDAACRKFERNAKSLSCLEGLRMLDIGCGAGLLCEPFTRLGAQVIGIDPSATNIAAAKLHADKSHLAIDYRNVMVEEIDPRERFDIVLAMEVIEHVTDVGAFLSRCAALMKPTGIMVVATLNRNWKSFALAIVGAEYVMRWLPRGTHQWDKFVTPAELEQHLNRLKLIVTEQSGLVFNPLADRWKLSPDMDVNYMMVAEAAP</sequence>
<evidence type="ECO:0000255" key="1">
    <source>
        <dbReference type="HAMAP-Rule" id="MF_00472"/>
    </source>
</evidence>
<evidence type="ECO:0000305" key="2"/>
<gene>
    <name evidence="1" type="primary">ubiG</name>
    <name type="ordered locus">RPA0603</name>
</gene>
<reference key="1">
    <citation type="journal article" date="2004" name="Nat. Biotechnol.">
        <title>Complete genome sequence of the metabolically versatile photosynthetic bacterium Rhodopseudomonas palustris.</title>
        <authorList>
            <person name="Larimer F.W."/>
            <person name="Chain P."/>
            <person name="Hauser L."/>
            <person name="Lamerdin J.E."/>
            <person name="Malfatti S."/>
            <person name="Do L."/>
            <person name="Land M.L."/>
            <person name="Pelletier D.A."/>
            <person name="Beatty J.T."/>
            <person name="Lang A.S."/>
            <person name="Tabita F.R."/>
            <person name="Gibson J.L."/>
            <person name="Hanson T.E."/>
            <person name="Bobst C."/>
            <person name="Torres y Torres J.L."/>
            <person name="Peres C."/>
            <person name="Harrison F.H."/>
            <person name="Gibson J."/>
            <person name="Harwood C.S."/>
        </authorList>
    </citation>
    <scope>NUCLEOTIDE SEQUENCE [LARGE SCALE GENOMIC DNA]</scope>
    <source>
        <strain>ATCC BAA-98 / CGA009</strain>
    </source>
</reference>